<proteinExistence type="inferred from homology"/>
<accession>Q6AS28</accession>
<comment type="catalytic activity">
    <reaction evidence="1">
        <text>tRNA(Gly) + glycine + ATP = glycyl-tRNA(Gly) + AMP + diphosphate</text>
        <dbReference type="Rhea" id="RHEA:16013"/>
        <dbReference type="Rhea" id="RHEA-COMP:9664"/>
        <dbReference type="Rhea" id="RHEA-COMP:9683"/>
        <dbReference type="ChEBI" id="CHEBI:30616"/>
        <dbReference type="ChEBI" id="CHEBI:33019"/>
        <dbReference type="ChEBI" id="CHEBI:57305"/>
        <dbReference type="ChEBI" id="CHEBI:78442"/>
        <dbReference type="ChEBI" id="CHEBI:78522"/>
        <dbReference type="ChEBI" id="CHEBI:456215"/>
        <dbReference type="EC" id="6.1.1.14"/>
    </reaction>
</comment>
<comment type="subunit">
    <text evidence="1">Tetramer of two alpha and two beta subunits.</text>
</comment>
<comment type="subcellular location">
    <subcellularLocation>
        <location evidence="1">Cytoplasm</location>
    </subcellularLocation>
</comment>
<comment type="similarity">
    <text evidence="1">Belongs to the class-II aminoacyl-tRNA synthetase family.</text>
</comment>
<keyword id="KW-0030">Aminoacyl-tRNA synthetase</keyword>
<keyword id="KW-0067">ATP-binding</keyword>
<keyword id="KW-0963">Cytoplasm</keyword>
<keyword id="KW-0436">Ligase</keyword>
<keyword id="KW-0547">Nucleotide-binding</keyword>
<keyword id="KW-0648">Protein biosynthesis</keyword>
<keyword id="KW-1185">Reference proteome</keyword>
<organism>
    <name type="scientific">Desulfotalea psychrophila (strain LSv54 / DSM 12343)</name>
    <dbReference type="NCBI Taxonomy" id="177439"/>
    <lineage>
        <taxon>Bacteria</taxon>
        <taxon>Pseudomonadati</taxon>
        <taxon>Thermodesulfobacteriota</taxon>
        <taxon>Desulfobulbia</taxon>
        <taxon>Desulfobulbales</taxon>
        <taxon>Desulfocapsaceae</taxon>
        <taxon>Desulfotalea</taxon>
    </lineage>
</organism>
<dbReference type="EC" id="6.1.1.14" evidence="1"/>
<dbReference type="EMBL" id="CR522870">
    <property type="protein sequence ID" value="CAG34847.1"/>
    <property type="molecule type" value="Genomic_DNA"/>
</dbReference>
<dbReference type="RefSeq" id="WP_011187363.1">
    <property type="nucleotide sequence ID" value="NC_006138.1"/>
</dbReference>
<dbReference type="SMR" id="Q6AS28"/>
<dbReference type="STRING" id="177439.DP0118"/>
<dbReference type="KEGG" id="dps:DP0118"/>
<dbReference type="eggNOG" id="COG0752">
    <property type="taxonomic scope" value="Bacteria"/>
</dbReference>
<dbReference type="HOGENOM" id="CLU_057066_1_0_7"/>
<dbReference type="OrthoDB" id="9802183at2"/>
<dbReference type="Proteomes" id="UP000000602">
    <property type="component" value="Chromosome"/>
</dbReference>
<dbReference type="GO" id="GO:0005829">
    <property type="term" value="C:cytosol"/>
    <property type="evidence" value="ECO:0007669"/>
    <property type="project" value="TreeGrafter"/>
</dbReference>
<dbReference type="GO" id="GO:0005524">
    <property type="term" value="F:ATP binding"/>
    <property type="evidence" value="ECO:0007669"/>
    <property type="project" value="UniProtKB-UniRule"/>
</dbReference>
<dbReference type="GO" id="GO:0004820">
    <property type="term" value="F:glycine-tRNA ligase activity"/>
    <property type="evidence" value="ECO:0007669"/>
    <property type="project" value="UniProtKB-UniRule"/>
</dbReference>
<dbReference type="GO" id="GO:0006426">
    <property type="term" value="P:glycyl-tRNA aminoacylation"/>
    <property type="evidence" value="ECO:0007669"/>
    <property type="project" value="UniProtKB-UniRule"/>
</dbReference>
<dbReference type="CDD" id="cd00733">
    <property type="entry name" value="GlyRS_alpha_core"/>
    <property type="match status" value="1"/>
</dbReference>
<dbReference type="FunFam" id="3.30.930.10:FF:000006">
    <property type="entry name" value="Glycine--tRNA ligase alpha subunit"/>
    <property type="match status" value="1"/>
</dbReference>
<dbReference type="Gene3D" id="3.30.930.10">
    <property type="entry name" value="Bira Bifunctional Protein, Domain 2"/>
    <property type="match status" value="1"/>
</dbReference>
<dbReference type="Gene3D" id="1.20.58.180">
    <property type="entry name" value="Class II aaRS and biotin synthetases, domain 2"/>
    <property type="match status" value="1"/>
</dbReference>
<dbReference type="HAMAP" id="MF_00254">
    <property type="entry name" value="Gly_tRNA_synth_alpha"/>
    <property type="match status" value="1"/>
</dbReference>
<dbReference type="InterPro" id="IPR045864">
    <property type="entry name" value="aa-tRNA-synth_II/BPL/LPL"/>
</dbReference>
<dbReference type="InterPro" id="IPR006194">
    <property type="entry name" value="Gly-tRNA-synth_heterodimer"/>
</dbReference>
<dbReference type="InterPro" id="IPR002310">
    <property type="entry name" value="Gly-tRNA_ligase_asu"/>
</dbReference>
<dbReference type="NCBIfam" id="TIGR00388">
    <property type="entry name" value="glyQ"/>
    <property type="match status" value="1"/>
</dbReference>
<dbReference type="NCBIfam" id="NF006827">
    <property type="entry name" value="PRK09348.1"/>
    <property type="match status" value="1"/>
</dbReference>
<dbReference type="PANTHER" id="PTHR30075:SF2">
    <property type="entry name" value="GLYCINE--TRNA LIGASE, CHLOROPLASTIC_MITOCHONDRIAL 2"/>
    <property type="match status" value="1"/>
</dbReference>
<dbReference type="PANTHER" id="PTHR30075">
    <property type="entry name" value="GLYCYL-TRNA SYNTHETASE"/>
    <property type="match status" value="1"/>
</dbReference>
<dbReference type="Pfam" id="PF02091">
    <property type="entry name" value="tRNA-synt_2e"/>
    <property type="match status" value="1"/>
</dbReference>
<dbReference type="PRINTS" id="PR01044">
    <property type="entry name" value="TRNASYNTHGA"/>
</dbReference>
<dbReference type="SUPFAM" id="SSF55681">
    <property type="entry name" value="Class II aaRS and biotin synthetases"/>
    <property type="match status" value="1"/>
</dbReference>
<dbReference type="PROSITE" id="PS50861">
    <property type="entry name" value="AA_TRNA_LIGASE_II_GLYAB"/>
    <property type="match status" value="1"/>
</dbReference>
<protein>
    <recommendedName>
        <fullName evidence="1">Glycine--tRNA ligase alpha subunit</fullName>
        <ecNumber evidence="1">6.1.1.14</ecNumber>
    </recommendedName>
    <alternativeName>
        <fullName evidence="1">Glycyl-tRNA synthetase alpha subunit</fullName>
        <shortName evidence="1">GlyRS</shortName>
    </alternativeName>
</protein>
<evidence type="ECO:0000255" key="1">
    <source>
        <dbReference type="HAMAP-Rule" id="MF_00254"/>
    </source>
</evidence>
<gene>
    <name evidence="1" type="primary">glyQ</name>
    <name type="ordered locus">DP0118</name>
</gene>
<reference key="1">
    <citation type="journal article" date="2004" name="Environ. Microbiol.">
        <title>The genome of Desulfotalea psychrophila, a sulfate-reducing bacterium from permanently cold Arctic sediments.</title>
        <authorList>
            <person name="Rabus R."/>
            <person name="Ruepp A."/>
            <person name="Frickey T."/>
            <person name="Rattei T."/>
            <person name="Fartmann B."/>
            <person name="Stark M."/>
            <person name="Bauer M."/>
            <person name="Zibat A."/>
            <person name="Lombardot T."/>
            <person name="Becker I."/>
            <person name="Amann J."/>
            <person name="Gellner K."/>
            <person name="Teeling H."/>
            <person name="Leuschner W.D."/>
            <person name="Gloeckner F.-O."/>
            <person name="Lupas A.N."/>
            <person name="Amann R."/>
            <person name="Klenk H.-P."/>
        </authorList>
    </citation>
    <scope>NUCLEOTIDE SEQUENCE [LARGE SCALE GENOMIC DNA]</scope>
    <source>
        <strain>DSM 12343 / LSv54</strain>
    </source>
</reference>
<feature type="chain" id="PRO_1000047415" description="Glycine--tRNA ligase alpha subunit">
    <location>
        <begin position="1"/>
        <end position="290"/>
    </location>
</feature>
<name>SYGA_DESPS</name>
<sequence>MNFQNIIFELNNYWAEQGCVVQQPYDMEVGAGTFHPATLLRSLGPEPWKAAYAQPSRRPTDGRYGENPNRLQHYYQYQVVMKPSPLNIQELYLGSLKRFGLNLLEHDIRFVEDDWESPTLGASGLGWEIWLDGMEISQFTYFQQAGSIDLTPTTVEITYGLERIAMYLQGVESVYDIAWNDEVTYGEIFHQAEVEFSTFNFEEANVEKLTDFFNSFEEEAHKLIAKKLILPAYDYCLKCSHTFNLLDARKAISVTERTRYIGRIRNIARGVAEQYVIQRAELGHPLIKNK</sequence>